<gene>
    <name evidence="1" type="primary">mutS</name>
    <name type="ordered locus">Mmwyl1_3734</name>
</gene>
<organism>
    <name type="scientific">Marinomonas sp. (strain MWYL1)</name>
    <dbReference type="NCBI Taxonomy" id="400668"/>
    <lineage>
        <taxon>Bacteria</taxon>
        <taxon>Pseudomonadati</taxon>
        <taxon>Pseudomonadota</taxon>
        <taxon>Gammaproteobacteria</taxon>
        <taxon>Oceanospirillales</taxon>
        <taxon>Oceanospirillaceae</taxon>
        <taxon>Marinomonas</taxon>
    </lineage>
</organism>
<keyword id="KW-0067">ATP-binding</keyword>
<keyword id="KW-0227">DNA damage</keyword>
<keyword id="KW-0234">DNA repair</keyword>
<keyword id="KW-0238">DNA-binding</keyword>
<keyword id="KW-0547">Nucleotide-binding</keyword>
<reference key="1">
    <citation type="submission" date="2007-06" db="EMBL/GenBank/DDBJ databases">
        <title>Complete sequence of Marinomonas sp. MWYL1.</title>
        <authorList>
            <consortium name="US DOE Joint Genome Institute"/>
            <person name="Copeland A."/>
            <person name="Lucas S."/>
            <person name="Lapidus A."/>
            <person name="Barry K."/>
            <person name="Glavina del Rio T."/>
            <person name="Dalin E."/>
            <person name="Tice H."/>
            <person name="Pitluck S."/>
            <person name="Kiss H."/>
            <person name="Brettin T."/>
            <person name="Bruce D."/>
            <person name="Detter J.C."/>
            <person name="Han C."/>
            <person name="Schmutz J."/>
            <person name="Larimer F."/>
            <person name="Land M."/>
            <person name="Hauser L."/>
            <person name="Kyrpides N."/>
            <person name="Kim E."/>
            <person name="Johnston A.W.B."/>
            <person name="Todd J.D."/>
            <person name="Rogers R."/>
            <person name="Wexler M."/>
            <person name="Bond P.L."/>
            <person name="Li Y."/>
            <person name="Richardson P."/>
        </authorList>
    </citation>
    <scope>NUCLEOTIDE SEQUENCE [LARGE SCALE GENOMIC DNA]</scope>
    <source>
        <strain>MWYL1</strain>
    </source>
</reference>
<proteinExistence type="inferred from homology"/>
<feature type="chain" id="PRO_0000335178" description="DNA mismatch repair protein MutS">
    <location>
        <begin position="1"/>
        <end position="883"/>
    </location>
</feature>
<feature type="binding site" evidence="1">
    <location>
        <begin position="619"/>
        <end position="626"/>
    </location>
    <ligand>
        <name>ATP</name>
        <dbReference type="ChEBI" id="CHEBI:30616"/>
    </ligand>
</feature>
<name>MUTS_MARMS</name>
<protein>
    <recommendedName>
        <fullName evidence="1">DNA mismatch repair protein MutS</fullName>
    </recommendedName>
</protein>
<comment type="function">
    <text evidence="1">This protein is involved in the repair of mismatches in DNA. It is possible that it carries out the mismatch recognition step. This protein has a weak ATPase activity.</text>
</comment>
<comment type="similarity">
    <text evidence="1">Belongs to the DNA mismatch repair MutS family.</text>
</comment>
<accession>A6W1Q6</accession>
<evidence type="ECO:0000255" key="1">
    <source>
        <dbReference type="HAMAP-Rule" id="MF_00096"/>
    </source>
</evidence>
<dbReference type="EMBL" id="CP000749">
    <property type="protein sequence ID" value="ABR72635.1"/>
    <property type="molecule type" value="Genomic_DNA"/>
</dbReference>
<dbReference type="SMR" id="A6W1Q6"/>
<dbReference type="STRING" id="400668.Mmwyl1_3734"/>
<dbReference type="KEGG" id="mmw:Mmwyl1_3734"/>
<dbReference type="eggNOG" id="COG0249">
    <property type="taxonomic scope" value="Bacteria"/>
</dbReference>
<dbReference type="HOGENOM" id="CLU_002472_4_0_6"/>
<dbReference type="OrthoDB" id="9802448at2"/>
<dbReference type="GO" id="GO:0005829">
    <property type="term" value="C:cytosol"/>
    <property type="evidence" value="ECO:0007669"/>
    <property type="project" value="TreeGrafter"/>
</dbReference>
<dbReference type="GO" id="GO:0005524">
    <property type="term" value="F:ATP binding"/>
    <property type="evidence" value="ECO:0007669"/>
    <property type="project" value="UniProtKB-UniRule"/>
</dbReference>
<dbReference type="GO" id="GO:0140664">
    <property type="term" value="F:ATP-dependent DNA damage sensor activity"/>
    <property type="evidence" value="ECO:0007669"/>
    <property type="project" value="InterPro"/>
</dbReference>
<dbReference type="GO" id="GO:0003684">
    <property type="term" value="F:damaged DNA binding"/>
    <property type="evidence" value="ECO:0007669"/>
    <property type="project" value="UniProtKB-UniRule"/>
</dbReference>
<dbReference type="GO" id="GO:0030983">
    <property type="term" value="F:mismatched DNA binding"/>
    <property type="evidence" value="ECO:0007669"/>
    <property type="project" value="InterPro"/>
</dbReference>
<dbReference type="GO" id="GO:0006298">
    <property type="term" value="P:mismatch repair"/>
    <property type="evidence" value="ECO:0007669"/>
    <property type="project" value="UniProtKB-UniRule"/>
</dbReference>
<dbReference type="CDD" id="cd03284">
    <property type="entry name" value="ABC_MutS1"/>
    <property type="match status" value="1"/>
</dbReference>
<dbReference type="FunFam" id="1.10.1420.10:FF:000002">
    <property type="entry name" value="DNA mismatch repair protein MutS"/>
    <property type="match status" value="1"/>
</dbReference>
<dbReference type="FunFam" id="3.40.1170.10:FF:000001">
    <property type="entry name" value="DNA mismatch repair protein MutS"/>
    <property type="match status" value="1"/>
</dbReference>
<dbReference type="FunFam" id="3.40.50.300:FF:000870">
    <property type="entry name" value="MutS protein homolog 4"/>
    <property type="match status" value="1"/>
</dbReference>
<dbReference type="Gene3D" id="1.10.1420.10">
    <property type="match status" value="2"/>
</dbReference>
<dbReference type="Gene3D" id="6.10.140.430">
    <property type="match status" value="1"/>
</dbReference>
<dbReference type="Gene3D" id="3.40.1170.10">
    <property type="entry name" value="DNA repair protein MutS, domain I"/>
    <property type="match status" value="1"/>
</dbReference>
<dbReference type="Gene3D" id="3.30.420.110">
    <property type="entry name" value="MutS, connector domain"/>
    <property type="match status" value="1"/>
</dbReference>
<dbReference type="Gene3D" id="3.40.50.300">
    <property type="entry name" value="P-loop containing nucleotide triphosphate hydrolases"/>
    <property type="match status" value="1"/>
</dbReference>
<dbReference type="HAMAP" id="MF_00096">
    <property type="entry name" value="MutS"/>
    <property type="match status" value="1"/>
</dbReference>
<dbReference type="InterPro" id="IPR005748">
    <property type="entry name" value="DNA_mismatch_repair_MutS"/>
</dbReference>
<dbReference type="InterPro" id="IPR007695">
    <property type="entry name" value="DNA_mismatch_repair_MutS-lik_N"/>
</dbReference>
<dbReference type="InterPro" id="IPR017261">
    <property type="entry name" value="DNA_mismatch_repair_MutS/MSH"/>
</dbReference>
<dbReference type="InterPro" id="IPR000432">
    <property type="entry name" value="DNA_mismatch_repair_MutS_C"/>
</dbReference>
<dbReference type="InterPro" id="IPR007861">
    <property type="entry name" value="DNA_mismatch_repair_MutS_clamp"/>
</dbReference>
<dbReference type="InterPro" id="IPR007696">
    <property type="entry name" value="DNA_mismatch_repair_MutS_core"/>
</dbReference>
<dbReference type="InterPro" id="IPR016151">
    <property type="entry name" value="DNA_mismatch_repair_MutS_N"/>
</dbReference>
<dbReference type="InterPro" id="IPR036187">
    <property type="entry name" value="DNA_mismatch_repair_MutS_sf"/>
</dbReference>
<dbReference type="InterPro" id="IPR007860">
    <property type="entry name" value="DNA_mmatch_repair_MutS_con_dom"/>
</dbReference>
<dbReference type="InterPro" id="IPR045076">
    <property type="entry name" value="MutS"/>
</dbReference>
<dbReference type="InterPro" id="IPR036678">
    <property type="entry name" value="MutS_con_dom_sf"/>
</dbReference>
<dbReference type="InterPro" id="IPR027417">
    <property type="entry name" value="P-loop_NTPase"/>
</dbReference>
<dbReference type="NCBIfam" id="TIGR01070">
    <property type="entry name" value="mutS1"/>
    <property type="match status" value="1"/>
</dbReference>
<dbReference type="NCBIfam" id="NF003810">
    <property type="entry name" value="PRK05399.1"/>
    <property type="match status" value="1"/>
</dbReference>
<dbReference type="PANTHER" id="PTHR11361:SF34">
    <property type="entry name" value="DNA MISMATCH REPAIR PROTEIN MSH1, MITOCHONDRIAL"/>
    <property type="match status" value="1"/>
</dbReference>
<dbReference type="PANTHER" id="PTHR11361">
    <property type="entry name" value="DNA MISMATCH REPAIR PROTEIN MUTS FAMILY MEMBER"/>
    <property type="match status" value="1"/>
</dbReference>
<dbReference type="Pfam" id="PF01624">
    <property type="entry name" value="MutS_I"/>
    <property type="match status" value="1"/>
</dbReference>
<dbReference type="Pfam" id="PF05188">
    <property type="entry name" value="MutS_II"/>
    <property type="match status" value="1"/>
</dbReference>
<dbReference type="Pfam" id="PF05192">
    <property type="entry name" value="MutS_III"/>
    <property type="match status" value="1"/>
</dbReference>
<dbReference type="Pfam" id="PF05190">
    <property type="entry name" value="MutS_IV"/>
    <property type="match status" value="1"/>
</dbReference>
<dbReference type="Pfam" id="PF00488">
    <property type="entry name" value="MutS_V"/>
    <property type="match status" value="1"/>
</dbReference>
<dbReference type="PIRSF" id="PIRSF037677">
    <property type="entry name" value="DNA_mis_repair_Msh6"/>
    <property type="match status" value="1"/>
</dbReference>
<dbReference type="SMART" id="SM00534">
    <property type="entry name" value="MUTSac"/>
    <property type="match status" value="1"/>
</dbReference>
<dbReference type="SMART" id="SM00533">
    <property type="entry name" value="MUTSd"/>
    <property type="match status" value="1"/>
</dbReference>
<dbReference type="SUPFAM" id="SSF55271">
    <property type="entry name" value="DNA repair protein MutS, domain I"/>
    <property type="match status" value="1"/>
</dbReference>
<dbReference type="SUPFAM" id="SSF53150">
    <property type="entry name" value="DNA repair protein MutS, domain II"/>
    <property type="match status" value="1"/>
</dbReference>
<dbReference type="SUPFAM" id="SSF48334">
    <property type="entry name" value="DNA repair protein MutS, domain III"/>
    <property type="match status" value="1"/>
</dbReference>
<dbReference type="SUPFAM" id="SSF52540">
    <property type="entry name" value="P-loop containing nucleoside triphosphate hydrolases"/>
    <property type="match status" value="1"/>
</dbReference>
<dbReference type="PROSITE" id="PS00486">
    <property type="entry name" value="DNA_MISMATCH_REPAIR_2"/>
    <property type="match status" value="1"/>
</dbReference>
<sequence length="883" mass="97973">MSKTPADNHTPMMRQYFGLKSQHPNQLLFYRMGDFYELFYDDAKRASRLLDITLTARGHSGGIPIPMAGIPYHAAENYIARLVRMGESVVVAEQTGDPATSKGPVERQIARIVTPGTISDEAFLEEKRENLLLSLAHQSRKGLDIFGFSYLDMASGRFCLFEVDGHEALSSELQRLSPREILISEDFPARATLKLEKGISELGPWHFDYESSYRQLIQQFSTKDLSGFGCEAMTAAIASAGALLQYAKDTQRSALPHIQSIMVEHKDDSVLIDGATRRNLEIDINLTGGTSNTLVEVLDKCSTPMGSRLLKRWLHTPIRDLNEIQARQQVVAELQQNQSYNAFEAPLKKVGDLERILSRVALRSARPRDLLRLRFALEAAPEINGLLANATSERLQELNLRILAQPIITETLAKALVENPPSVVRDGGIFAKGYDEELDELLALSTNATDFLAEMERSEKARTGISSLKVGFNRVHGYYIEISRLHSDQAPVEYIRRQTLKNAERFITPELKAFEDKALSAKSKSLAREKELYEALLEQLNEILGELQTTSQALAQLDVLNNFAERANALSFTCPELHNRGGIQIVGGRHPVVESVISEPFVPNDLDLNDKRSLLMITGPNMGGKSTYMRQIALITLLAHTGCFVPAESASISVVDRIFTRMGSSDDLAGGRSTFMVEMTETANILNNASKNSLVLMDEVGRGTSTFDGLSLAWAAVDYLANKLKCYVLFATHYFELTTLADQLENAANVHLTATEYEDEIVFLHKVHEGPASQSYGLQVAQLAGVPRDVIGHAKQKLKELEVVTGIDLDTKTIETKANSSSIKAKTKEHLVKESKNGYQPQQVDMFAQAEQNALKNALEELDLDNMTPLEAISALYKLKSQL</sequence>